<proteinExistence type="evidence at protein level"/>
<organism>
    <name type="scientific">Arthroderma benhamiae (strain ATCC MYA-4681 / CBS 112371)</name>
    <name type="common">Trichophyton mentagrophytes</name>
    <dbReference type="NCBI Taxonomy" id="663331"/>
    <lineage>
        <taxon>Eukaryota</taxon>
        <taxon>Fungi</taxon>
        <taxon>Dikarya</taxon>
        <taxon>Ascomycota</taxon>
        <taxon>Pezizomycotina</taxon>
        <taxon>Eurotiomycetes</taxon>
        <taxon>Eurotiomycetidae</taxon>
        <taxon>Onygenales</taxon>
        <taxon>Arthrodermataceae</taxon>
        <taxon>Trichophyton</taxon>
    </lineage>
</organism>
<accession>D4B2W4</accession>
<keyword id="KW-0020">Allergen</keyword>
<keyword id="KW-0134">Cell wall</keyword>
<keyword id="KW-0963">Cytoplasm</keyword>
<keyword id="KW-0325">Glycoprotein</keyword>
<keyword id="KW-0326">Glycosidase</keyword>
<keyword id="KW-0378">Hydrolase</keyword>
<keyword id="KW-1185">Reference proteome</keyword>
<keyword id="KW-0964">Secreted</keyword>
<keyword id="KW-0732">Signal</keyword>
<comment type="function">
    <text evidence="2">Cell wall glucan 1,3-beta-glucosidase involved in cell wall biosynthesis and virulence (By similarity). Crucial for delivery of beta-1,3-glucan to the biofilm matrix and for accumulation of mature matrix biomass (By similarity).</text>
</comment>
<comment type="catalytic activity">
    <reaction evidence="2">
        <text>Successive hydrolysis of beta-D-glucose units from the non-reducing ends of (1-&gt;3)-beta-D-glucans, releasing alpha-glucose.</text>
        <dbReference type="EC" id="3.2.1.58"/>
    </reaction>
</comment>
<comment type="subcellular location">
    <subcellularLocation>
        <location evidence="5 6">Secreted</location>
    </subcellularLocation>
    <subcellularLocation>
        <location evidence="2">Secreted</location>
        <location evidence="2">Cell wall</location>
    </subcellularLocation>
    <subcellularLocation>
        <location evidence="2">Cytoplasm</location>
    </subcellularLocation>
</comment>
<comment type="induction">
    <text evidence="5">Expression is down-regulated in presence of human keratinocytes.</text>
</comment>
<comment type="allergen">
    <text evidence="7">May cause an allergic reaction in human.</text>
</comment>
<comment type="similarity">
    <text evidence="7">Belongs to the glycosyl hydrolase 17 family.</text>
</comment>
<gene>
    <name type="ORF">ARB_02797</name>
</gene>
<feature type="signal peptide" evidence="3">
    <location>
        <begin position="1"/>
        <end position="20"/>
    </location>
</feature>
<feature type="chain" id="PRO_0000434662" description="Glucan 1,3-beta-glucosidase ARB_02797" evidence="3">
    <location>
        <begin position="21"/>
        <end position="308"/>
    </location>
</feature>
<feature type="active site" description="Proton donor" evidence="1">
    <location>
        <position position="120"/>
    </location>
</feature>
<feature type="active site" description="Nucleophile" evidence="1">
    <location>
        <position position="220"/>
    </location>
</feature>
<feature type="glycosylation site" description="N-linked (GlcNAc...) asparagine" evidence="4">
    <location>
        <position position="126"/>
    </location>
</feature>
<evidence type="ECO:0000250" key="1">
    <source>
        <dbReference type="UniProtKB" id="O22317"/>
    </source>
</evidence>
<evidence type="ECO:0000250" key="2">
    <source>
        <dbReference type="UniProtKB" id="Q5AMT2"/>
    </source>
</evidence>
<evidence type="ECO:0000255" key="3"/>
<evidence type="ECO:0000255" key="4">
    <source>
        <dbReference type="PROSITE-ProRule" id="PRU00498"/>
    </source>
</evidence>
<evidence type="ECO:0000269" key="5">
    <source>
    </source>
</evidence>
<evidence type="ECO:0000269" key="6">
    <source>
    </source>
</evidence>
<evidence type="ECO:0000305" key="7"/>
<evidence type="ECO:0000312" key="8">
    <source>
        <dbReference type="Proteomes" id="UP000008866"/>
    </source>
</evidence>
<dbReference type="EC" id="3.2.1.58" evidence="2"/>
<dbReference type="EMBL" id="ABSU01000031">
    <property type="protein sequence ID" value="EFE30260.1"/>
    <property type="molecule type" value="Genomic_DNA"/>
</dbReference>
<dbReference type="RefSeq" id="XP_003010900.1">
    <property type="nucleotide sequence ID" value="XM_003010854.1"/>
</dbReference>
<dbReference type="SMR" id="D4B2W4"/>
<dbReference type="STRING" id="663331.D4B2W4"/>
<dbReference type="GeneID" id="9525013"/>
<dbReference type="KEGG" id="abe:ARB_02797"/>
<dbReference type="eggNOG" id="ENOG502QQE6">
    <property type="taxonomic scope" value="Eukaryota"/>
</dbReference>
<dbReference type="HOGENOM" id="CLU_028820_2_0_1"/>
<dbReference type="OMA" id="EGICAMR"/>
<dbReference type="OrthoDB" id="1293114at2759"/>
<dbReference type="Proteomes" id="UP000008866">
    <property type="component" value="Unassembled WGS sequence"/>
</dbReference>
<dbReference type="GO" id="GO:0009986">
    <property type="term" value="C:cell surface"/>
    <property type="evidence" value="ECO:0007669"/>
    <property type="project" value="TreeGrafter"/>
</dbReference>
<dbReference type="GO" id="GO:0005737">
    <property type="term" value="C:cytoplasm"/>
    <property type="evidence" value="ECO:0007669"/>
    <property type="project" value="UniProtKB-SubCell"/>
</dbReference>
<dbReference type="GO" id="GO:0005576">
    <property type="term" value="C:extracellular region"/>
    <property type="evidence" value="ECO:0007669"/>
    <property type="project" value="UniProtKB-SubCell"/>
</dbReference>
<dbReference type="GO" id="GO:0009277">
    <property type="term" value="C:fungal-type cell wall"/>
    <property type="evidence" value="ECO:0007669"/>
    <property type="project" value="TreeGrafter"/>
</dbReference>
<dbReference type="GO" id="GO:0042973">
    <property type="term" value="F:glucan endo-1,3-beta-D-glucosidase activity"/>
    <property type="evidence" value="ECO:0007669"/>
    <property type="project" value="TreeGrafter"/>
</dbReference>
<dbReference type="GO" id="GO:0004338">
    <property type="term" value="F:glucan exo-1,3-beta-glucosidase activity"/>
    <property type="evidence" value="ECO:0007669"/>
    <property type="project" value="UniProtKB-EC"/>
</dbReference>
<dbReference type="GO" id="GO:0005975">
    <property type="term" value="P:carbohydrate metabolic process"/>
    <property type="evidence" value="ECO:0007669"/>
    <property type="project" value="InterPro"/>
</dbReference>
<dbReference type="GO" id="GO:0071555">
    <property type="term" value="P:cell wall organization"/>
    <property type="evidence" value="ECO:0007669"/>
    <property type="project" value="TreeGrafter"/>
</dbReference>
<dbReference type="Gene3D" id="3.20.20.80">
    <property type="entry name" value="Glycosidases"/>
    <property type="match status" value="1"/>
</dbReference>
<dbReference type="InterPro" id="IPR050732">
    <property type="entry name" value="Beta-glucan_modifiers"/>
</dbReference>
<dbReference type="InterPro" id="IPR000490">
    <property type="entry name" value="Glyco_hydro_17"/>
</dbReference>
<dbReference type="InterPro" id="IPR017853">
    <property type="entry name" value="Glycoside_hydrolase_SF"/>
</dbReference>
<dbReference type="PANTHER" id="PTHR16631">
    <property type="entry name" value="GLUCAN 1,3-BETA-GLUCOSIDASE"/>
    <property type="match status" value="1"/>
</dbReference>
<dbReference type="PANTHER" id="PTHR16631:SF26">
    <property type="entry name" value="GLUCAN 1,3-BETA-GLUCOSIDASE"/>
    <property type="match status" value="1"/>
</dbReference>
<dbReference type="Pfam" id="PF00332">
    <property type="entry name" value="Glyco_hydro_17"/>
    <property type="match status" value="1"/>
</dbReference>
<dbReference type="SUPFAM" id="SSF51445">
    <property type="entry name" value="(Trans)glycosidases"/>
    <property type="match status" value="1"/>
</dbReference>
<sequence>MRFSTALSLALAVSPAAVFAAGNLGFSLGVKRPDGQCKDQADFEKDFDTLKAHGTTVRTYAAADCGSASLILPAAKSKGFKVVLGIWPDVEESYKADVDALKKAVPGNEDVVAAITVGSETLYRGNFTGPELLKKIKEVQKVFPKITIGTADSWNKYADGTADALIEGGVKYLLVNAFAFWQGKAIEQAPKTLFDDLVGAAKRIADKAPQGSSPYVAIGETGWPTDGGTDYGAAKAGTKNAEKFYKEGVCAMLAWGVDAFYFEAFDEPWKPKSIGDNGNAADETHWGMYTADRKPKFNADCKVNKKKD</sequence>
<name>BGL2_ARTBC</name>
<protein>
    <recommendedName>
        <fullName evidence="7">Glucan 1,3-beta-glucosidase ARB_02797</fullName>
        <ecNumber evidence="2">3.2.1.58</ecNumber>
    </recommendedName>
    <alternativeName>
        <fullName evidence="2">Exo-1,3-beta-glucanase</fullName>
    </alternativeName>
</protein>
<reference key="1">
    <citation type="journal article" date="2011" name="Genome Biol.">
        <title>Comparative and functional genomics provide insights into the pathogenicity of dermatophytic fungi.</title>
        <authorList>
            <person name="Burmester A."/>
            <person name="Shelest E."/>
            <person name="Gloeckner G."/>
            <person name="Heddergott C."/>
            <person name="Schindler S."/>
            <person name="Staib P."/>
            <person name="Heidel A."/>
            <person name="Felder M."/>
            <person name="Petzold A."/>
            <person name="Szafranski K."/>
            <person name="Feuermann M."/>
            <person name="Pedruzzi I."/>
            <person name="Priebe S."/>
            <person name="Groth M."/>
            <person name="Winkler R."/>
            <person name="Li W."/>
            <person name="Kniemeyer O."/>
            <person name="Schroeckh V."/>
            <person name="Hertweck C."/>
            <person name="Hube B."/>
            <person name="White T.C."/>
            <person name="Platzer M."/>
            <person name="Guthke R."/>
            <person name="Heitman J."/>
            <person name="Woestemeyer J."/>
            <person name="Zipfel P.F."/>
            <person name="Monod M."/>
            <person name="Brakhage A.A."/>
        </authorList>
    </citation>
    <scope>NUCLEOTIDE SEQUENCE [LARGE SCALE GENOMIC DNA]</scope>
    <scope>IDENTIFICATION BY MASS SPECTROMETRY</scope>
    <scope>SUBCELLULAR LOCATION</scope>
    <scope>INDUCTION</scope>
    <source>
        <strain evidence="8">ATCC MYA-4681 / CBS 112371</strain>
    </source>
</reference>
<reference key="2">
    <citation type="journal article" date="2011" name="Proteomics">
        <title>Identification of novel secreted proteases during extracellular proteolysis by dermatophytes at acidic pH.</title>
        <authorList>
            <person name="Sriranganadane D."/>
            <person name="Waridel P."/>
            <person name="Salamin K."/>
            <person name="Feuermann M."/>
            <person name="Mignon B."/>
            <person name="Staib P."/>
            <person name="Neuhaus J.M."/>
            <person name="Quadroni M."/>
            <person name="Monod M."/>
        </authorList>
    </citation>
    <scope>SUBCELLULAR LOCATION</scope>
    <scope>IDENTIFICATION BY MASS SPECTROMETRY</scope>
</reference>